<gene>
    <name evidence="1" type="primary">arnD</name>
    <name type="ordered locus">YPTS_2402</name>
</gene>
<accession>B2K5L2</accession>
<feature type="chain" id="PRO_0000383557" description="Probable 4-deoxy-4-formamido-L-arabinose-phosphoundecaprenol deformylase ArnD">
    <location>
        <begin position="1"/>
        <end position="301"/>
    </location>
</feature>
<feature type="domain" description="NodB homology" evidence="1">
    <location>
        <begin position="2"/>
        <end position="261"/>
    </location>
</feature>
<protein>
    <recommendedName>
        <fullName evidence="1">Probable 4-deoxy-4-formamido-L-arabinose-phosphoundecaprenol deformylase ArnD</fullName>
        <ecNumber evidence="1">3.5.1.n3</ecNumber>
    </recommendedName>
</protein>
<proteinExistence type="inferred from homology"/>
<evidence type="ECO:0000255" key="1">
    <source>
        <dbReference type="HAMAP-Rule" id="MF_01870"/>
    </source>
</evidence>
<sequence>MKQVGLRIDVDTYRGTQYGVPSLLTVLEKHDIRASFFFSVGPDNMGRHLWRLFRPRFLWKMLRSNAASLYGWDILLAGTAWPGKKIAKDFGPLMKAAAMAGHEVGLHAWDHQGWQANVASWSQQQLTEQVQRGVDTLQQSIGQPISCSAAAGWRADERVLAVKQQFDFSYNSDCRGTHPFRPLLPNGSLGSVQIPVTLPTYDEVVGGEVQAENFNDFIIDAILRDSGVSVYTIHAEVEGMSQAAMFEQLLMRAKQQDIEFCPLSKLLPSDLQLLPVGKVIRAAFPGREGWLGCQSDIKDAE</sequence>
<name>ARND_YERPB</name>
<keyword id="KW-0046">Antibiotic resistance</keyword>
<keyword id="KW-0378">Hydrolase</keyword>
<keyword id="KW-0441">Lipid A biosynthesis</keyword>
<keyword id="KW-0444">Lipid biosynthesis</keyword>
<keyword id="KW-0443">Lipid metabolism</keyword>
<keyword id="KW-0448">Lipopolysaccharide biosynthesis</keyword>
<reference key="1">
    <citation type="submission" date="2008-04" db="EMBL/GenBank/DDBJ databases">
        <title>Complete sequence of Yersinia pseudotuberculosis PB1/+.</title>
        <authorList>
            <person name="Copeland A."/>
            <person name="Lucas S."/>
            <person name="Lapidus A."/>
            <person name="Glavina del Rio T."/>
            <person name="Dalin E."/>
            <person name="Tice H."/>
            <person name="Bruce D."/>
            <person name="Goodwin L."/>
            <person name="Pitluck S."/>
            <person name="Munk A.C."/>
            <person name="Brettin T."/>
            <person name="Detter J.C."/>
            <person name="Han C."/>
            <person name="Tapia R."/>
            <person name="Schmutz J."/>
            <person name="Larimer F."/>
            <person name="Land M."/>
            <person name="Hauser L."/>
            <person name="Challacombe J.F."/>
            <person name="Green L."/>
            <person name="Lindler L.E."/>
            <person name="Nikolich M.P."/>
            <person name="Richardson P."/>
        </authorList>
    </citation>
    <scope>NUCLEOTIDE SEQUENCE [LARGE SCALE GENOMIC DNA]</scope>
    <source>
        <strain>PB1/+</strain>
    </source>
</reference>
<organism>
    <name type="scientific">Yersinia pseudotuberculosis serotype IB (strain PB1/+)</name>
    <dbReference type="NCBI Taxonomy" id="502801"/>
    <lineage>
        <taxon>Bacteria</taxon>
        <taxon>Pseudomonadati</taxon>
        <taxon>Pseudomonadota</taxon>
        <taxon>Gammaproteobacteria</taxon>
        <taxon>Enterobacterales</taxon>
        <taxon>Yersiniaceae</taxon>
        <taxon>Yersinia</taxon>
    </lineage>
</organism>
<dbReference type="EC" id="3.5.1.n3" evidence="1"/>
<dbReference type="EMBL" id="CP001048">
    <property type="protein sequence ID" value="ACC89363.1"/>
    <property type="molecule type" value="Genomic_DNA"/>
</dbReference>
<dbReference type="RefSeq" id="WP_002211822.1">
    <property type="nucleotide sequence ID" value="NZ_CP009780.1"/>
</dbReference>
<dbReference type="SMR" id="B2K5L2"/>
<dbReference type="GeneID" id="57976258"/>
<dbReference type="KEGG" id="ypb:YPTS_2402"/>
<dbReference type="PATRIC" id="fig|502801.10.peg.1808"/>
<dbReference type="UniPathway" id="UPA00030"/>
<dbReference type="UniPathway" id="UPA00036">
    <property type="reaction ID" value="UER00496"/>
</dbReference>
<dbReference type="GO" id="GO:0016020">
    <property type="term" value="C:membrane"/>
    <property type="evidence" value="ECO:0007669"/>
    <property type="project" value="GOC"/>
</dbReference>
<dbReference type="GO" id="GO:0016811">
    <property type="term" value="F:hydrolase activity, acting on carbon-nitrogen (but not peptide) bonds, in linear amides"/>
    <property type="evidence" value="ECO:0007669"/>
    <property type="project" value="UniProtKB-UniRule"/>
</dbReference>
<dbReference type="GO" id="GO:0036108">
    <property type="term" value="P:4-amino-4-deoxy-alpha-L-arabinopyranosyl undecaprenyl phosphate biosynthetic process"/>
    <property type="evidence" value="ECO:0007669"/>
    <property type="project" value="UniProtKB-UniRule"/>
</dbReference>
<dbReference type="GO" id="GO:0009245">
    <property type="term" value="P:lipid A biosynthetic process"/>
    <property type="evidence" value="ECO:0007669"/>
    <property type="project" value="UniProtKB-UniRule"/>
</dbReference>
<dbReference type="GO" id="GO:0009103">
    <property type="term" value="P:lipopolysaccharide biosynthetic process"/>
    <property type="evidence" value="ECO:0007669"/>
    <property type="project" value="UniProtKB-UniRule"/>
</dbReference>
<dbReference type="GO" id="GO:0046677">
    <property type="term" value="P:response to antibiotic"/>
    <property type="evidence" value="ECO:0007669"/>
    <property type="project" value="UniProtKB-KW"/>
</dbReference>
<dbReference type="CDD" id="cd10939">
    <property type="entry name" value="CE4_ArnD"/>
    <property type="match status" value="1"/>
</dbReference>
<dbReference type="Gene3D" id="3.20.20.370">
    <property type="entry name" value="Glycoside hydrolase/deacetylase"/>
    <property type="match status" value="1"/>
</dbReference>
<dbReference type="HAMAP" id="MF_01870">
    <property type="entry name" value="ArnD"/>
    <property type="match status" value="1"/>
</dbReference>
<dbReference type="InterPro" id="IPR023557">
    <property type="entry name" value="ArnD"/>
</dbReference>
<dbReference type="InterPro" id="IPR011330">
    <property type="entry name" value="Glyco_hydro/deAcase_b/a-brl"/>
</dbReference>
<dbReference type="InterPro" id="IPR002509">
    <property type="entry name" value="NODB_dom"/>
</dbReference>
<dbReference type="InterPro" id="IPR050248">
    <property type="entry name" value="Polysacc_deacetylase_ArnD"/>
</dbReference>
<dbReference type="NCBIfam" id="NF011923">
    <property type="entry name" value="PRK15394.1"/>
    <property type="match status" value="1"/>
</dbReference>
<dbReference type="PANTHER" id="PTHR10587:SF137">
    <property type="entry name" value="4-DEOXY-4-FORMAMIDO-L-ARABINOSE-PHOSPHOUNDECAPRENOL DEFORMYLASE ARND-RELATED"/>
    <property type="match status" value="1"/>
</dbReference>
<dbReference type="PANTHER" id="PTHR10587">
    <property type="entry name" value="GLYCOSYL TRANSFERASE-RELATED"/>
    <property type="match status" value="1"/>
</dbReference>
<dbReference type="Pfam" id="PF01522">
    <property type="entry name" value="Polysacc_deac_1"/>
    <property type="match status" value="1"/>
</dbReference>
<dbReference type="SUPFAM" id="SSF88713">
    <property type="entry name" value="Glycoside hydrolase/deacetylase"/>
    <property type="match status" value="1"/>
</dbReference>
<dbReference type="PROSITE" id="PS51677">
    <property type="entry name" value="NODB"/>
    <property type="match status" value="1"/>
</dbReference>
<comment type="function">
    <text evidence="1">Catalyzes the deformylation of 4-deoxy-4-formamido-L-arabinose-phosphoundecaprenol to 4-amino-4-deoxy-L-arabinose-phosphoundecaprenol. The modified arabinose is attached to lipid A and is required for resistance to polymyxin and cationic antimicrobial peptides.</text>
</comment>
<comment type="catalytic activity">
    <reaction evidence="1">
        <text>4-deoxy-4-formamido-alpha-L-arabinopyranosyl di-trans,octa-cis-undecaprenyl phosphate + H2O = 4-amino-4-deoxy-alpha-L-arabinopyranosyl di-trans,octa-cis-undecaprenyl phosphate + formate</text>
        <dbReference type="Rhea" id="RHEA:27734"/>
        <dbReference type="ChEBI" id="CHEBI:15377"/>
        <dbReference type="ChEBI" id="CHEBI:15740"/>
        <dbReference type="ChEBI" id="CHEBI:58909"/>
        <dbReference type="ChEBI" id="CHEBI:60463"/>
        <dbReference type="EC" id="3.5.1.n3"/>
    </reaction>
</comment>
<comment type="pathway">
    <text evidence="1">Glycolipid biosynthesis; 4-amino-4-deoxy-alpha-L-arabinose undecaprenyl phosphate biosynthesis; 4-amino-4-deoxy-alpha-L-arabinose undecaprenyl phosphate from UDP-4-deoxy-4-formamido-beta-L-arabinose and undecaprenyl phosphate: step 2/2.</text>
</comment>
<comment type="pathway">
    <text evidence="1">Bacterial outer membrane biogenesis; lipopolysaccharide biosynthesis.</text>
</comment>
<comment type="similarity">
    <text evidence="1">Belongs to the polysaccharide deacetylase family. ArnD deformylase subfamily.</text>
</comment>